<accession>K1WG73</accession>
<proteinExistence type="evidence at transcript level"/>
<organism evidence="8">
    <name type="scientific">Marssonina brunnea f. sp. multigermtubi (strain MB_m1)</name>
    <name type="common">Marssonina leaf spot fungus</name>
    <dbReference type="NCBI Taxonomy" id="1072389"/>
    <lineage>
        <taxon>Eukaryota</taxon>
        <taxon>Fungi</taxon>
        <taxon>Dikarya</taxon>
        <taxon>Ascomycota</taxon>
        <taxon>Pezizomycotina</taxon>
        <taxon>Leotiomycetes</taxon>
        <taxon>Helotiales</taxon>
        <taxon>Drepanopezizaceae</taxon>
        <taxon>Drepanopeziza</taxon>
    </lineage>
</organism>
<feature type="signal peptide" evidence="2">
    <location>
        <begin position="1"/>
        <end position="17"/>
    </location>
</feature>
<feature type="chain" id="PRO_5003852491" description="Effector CFEM6" evidence="2">
    <location>
        <begin position="18"/>
        <end position="247"/>
    </location>
</feature>
<feature type="propeptide" id="PRO_0000457867" description="Removed in mature form" evidence="2">
    <location>
        <begin position="248"/>
        <end position="271"/>
    </location>
</feature>
<feature type="domain" description="CFEM" evidence="3">
    <location>
        <begin position="18"/>
        <end position="111"/>
    </location>
</feature>
<feature type="binding site" description="axial binding residue" evidence="3">
    <location>
        <position position="46"/>
    </location>
    <ligand>
        <name>heme</name>
        <dbReference type="ChEBI" id="CHEBI:30413"/>
    </ligand>
    <ligandPart>
        <name>Fe</name>
        <dbReference type="ChEBI" id="CHEBI:18248"/>
    </ligandPart>
</feature>
<feature type="lipid moiety-binding region" description="GPI-anchor amidated serine" evidence="2">
    <location>
        <position position="247"/>
    </location>
</feature>
<feature type="disulfide bond" evidence="3">
    <location>
        <begin position="25"/>
        <end position="68"/>
    </location>
</feature>
<feature type="disulfide bond" evidence="3">
    <location>
        <begin position="29"/>
        <end position="63"/>
    </location>
</feature>
<feature type="disulfide bond" evidence="3">
    <location>
        <begin position="42"/>
        <end position="49"/>
    </location>
</feature>
<feature type="disulfide bond" evidence="3">
    <location>
        <begin position="51"/>
        <end position="84"/>
    </location>
</feature>
<dbReference type="EMBL" id="JH921438">
    <property type="protein sequence ID" value="EKD16530.1"/>
    <property type="molecule type" value="Genomic_DNA"/>
</dbReference>
<dbReference type="RefSeq" id="XP_007292888.1">
    <property type="nucleotide sequence ID" value="XM_007292826.1"/>
</dbReference>
<dbReference type="STRING" id="1072389.K1WG73"/>
<dbReference type="GeneID" id="18760934"/>
<dbReference type="KEGG" id="mbe:MBM_04999"/>
<dbReference type="eggNOG" id="ENOG502S1H2">
    <property type="taxonomic scope" value="Eukaryota"/>
</dbReference>
<dbReference type="HOGENOM" id="CLU_063084_0_0_1"/>
<dbReference type="InParanoid" id="K1WG73"/>
<dbReference type="OMA" id="VSDCAQM"/>
<dbReference type="OrthoDB" id="1193027at2759"/>
<dbReference type="Proteomes" id="UP000006753">
    <property type="component" value="Unassembled WGS sequence"/>
</dbReference>
<dbReference type="GO" id="GO:0005615">
    <property type="term" value="C:extracellular space"/>
    <property type="evidence" value="ECO:0000314"/>
    <property type="project" value="UniProtKB"/>
</dbReference>
<dbReference type="GO" id="GO:0042025">
    <property type="term" value="C:host cell nucleus"/>
    <property type="evidence" value="ECO:0000314"/>
    <property type="project" value="UniProtKB"/>
</dbReference>
<dbReference type="GO" id="GO:0020002">
    <property type="term" value="C:host cell plasma membrane"/>
    <property type="evidence" value="ECO:0000314"/>
    <property type="project" value="UniProtKB"/>
</dbReference>
<dbReference type="GO" id="GO:0005886">
    <property type="term" value="C:plasma membrane"/>
    <property type="evidence" value="ECO:0007669"/>
    <property type="project" value="UniProtKB-SubCell"/>
</dbReference>
<dbReference type="GO" id="GO:0098552">
    <property type="term" value="C:side of membrane"/>
    <property type="evidence" value="ECO:0007669"/>
    <property type="project" value="UniProtKB-KW"/>
</dbReference>
<dbReference type="GO" id="GO:0046872">
    <property type="term" value="F:metal ion binding"/>
    <property type="evidence" value="ECO:0007669"/>
    <property type="project" value="UniProtKB-KW"/>
</dbReference>
<dbReference type="GO" id="GO:0051701">
    <property type="term" value="P:biological process involved in interaction with host"/>
    <property type="evidence" value="ECO:0000314"/>
    <property type="project" value="UniProtKB"/>
</dbReference>
<dbReference type="InterPro" id="IPR051735">
    <property type="entry name" value="CFEM_domain"/>
</dbReference>
<dbReference type="InterPro" id="IPR008427">
    <property type="entry name" value="Extracellular_membr_CFEM_dom"/>
</dbReference>
<dbReference type="PANTHER" id="PTHR37928">
    <property type="entry name" value="CFEM DOMAIN PROTEIN (AFU_ORTHOLOGUE AFUA_6G14090)"/>
    <property type="match status" value="1"/>
</dbReference>
<dbReference type="PANTHER" id="PTHR37928:SF1">
    <property type="entry name" value="CFEM DOMAIN PROTEIN (AFU_ORTHOLOGUE AFUA_6G14090)"/>
    <property type="match status" value="1"/>
</dbReference>
<dbReference type="Pfam" id="PF05730">
    <property type="entry name" value="CFEM"/>
    <property type="match status" value="1"/>
</dbReference>
<dbReference type="SMART" id="SM00747">
    <property type="entry name" value="CFEM"/>
    <property type="match status" value="1"/>
</dbReference>
<dbReference type="PROSITE" id="PS52012">
    <property type="entry name" value="CFEM"/>
    <property type="match status" value="1"/>
</dbReference>
<name>CFM6_MARBU</name>
<evidence type="ECO:0000250" key="1">
    <source>
        <dbReference type="UniProtKB" id="Q5A0X8"/>
    </source>
</evidence>
<evidence type="ECO:0000255" key="2"/>
<evidence type="ECO:0000255" key="3">
    <source>
        <dbReference type="PROSITE-ProRule" id="PRU01356"/>
    </source>
</evidence>
<evidence type="ECO:0000269" key="4">
    <source>
    </source>
</evidence>
<evidence type="ECO:0000303" key="5">
    <source>
    </source>
</evidence>
<evidence type="ECO:0000305" key="6"/>
<evidence type="ECO:0000312" key="7">
    <source>
        <dbReference type="EMBL" id="EKD16530.1"/>
    </source>
</evidence>
<evidence type="ECO:0000312" key="8">
    <source>
        <dbReference type="Proteomes" id="UP000006753"/>
    </source>
</evidence>
<sequence length="271" mass="25819">MKYSMITLGAFAMMAVAQLSSLPACGQTCISNMLALAPTFGCTANDASCLCSDVNFAYGIRDCSNAACGAEAAGPVIAYGVEYCSSAGVGLSGSATGIDPGLGPATAVVASTPIATDGASAGSLSAITTSEFTSYVISGDSTVSTIVGSTTIYGPAAGSSSAITTSPIVSTVTSGDTSYPTTVGSTTIFGVAGVISTPTASASSALDSLSSSIASEASVITSSASAAVSSLSSRLSSAASPVSTTTSSAGGARQTAFAGLAAAAGFAAIIL</sequence>
<protein>
    <recommendedName>
        <fullName evidence="5">Effector CFEM6</fullName>
    </recommendedName>
    <alternativeName>
        <fullName evidence="5">MbCFEM6</fullName>
    </alternativeName>
</protein>
<gene>
    <name evidence="5" type="primary">CFEM6</name>
    <name evidence="7" type="ORF">MBM_04999</name>
</gene>
<keyword id="KW-1003">Cell membrane</keyword>
<keyword id="KW-1015">Disulfide bond</keyword>
<keyword id="KW-0325">Glycoprotein</keyword>
<keyword id="KW-0336">GPI-anchor</keyword>
<keyword id="KW-0349">Heme</keyword>
<keyword id="KW-1032">Host cell membrane</keyword>
<keyword id="KW-1043">Host membrane</keyword>
<keyword id="KW-1048">Host nucleus</keyword>
<keyword id="KW-0408">Iron</keyword>
<keyword id="KW-0449">Lipoprotein</keyword>
<keyword id="KW-0472">Membrane</keyword>
<keyword id="KW-0479">Metal-binding</keyword>
<keyword id="KW-1185">Reference proteome</keyword>
<keyword id="KW-0964">Secreted</keyword>
<keyword id="KW-0732">Signal</keyword>
<keyword id="KW-0843">Virulence</keyword>
<comment type="function">
    <text evidence="4">Appears to function during host infection, and may play a role in suppressing the host immune response.</text>
</comment>
<comment type="subcellular location">
    <subcellularLocation>
        <location evidence="2">Cell membrane</location>
        <topology evidence="2">Lipid-anchor</topology>
        <topology evidence="2">GPI-anchor</topology>
    </subcellularLocation>
    <subcellularLocation>
        <location evidence="4">Secreted</location>
    </subcellularLocation>
    <subcellularLocation>
        <location evidence="4">Host nucleus</location>
    </subcellularLocation>
    <subcellularLocation>
        <location evidence="4">Host cell membrane</location>
    </subcellularLocation>
    <subcellularLocation>
        <location evidence="4">Host chloroplast envelope</location>
    </subcellularLocation>
</comment>
<comment type="induction">
    <text evidence="4">Induced during infection of poplar leaves, with highest expression observed four days post inoculation.</text>
</comment>
<comment type="domain">
    <text evidence="1">The CFEM domain is involved in heme-binding and contains 8 cysteines and is found in proteins from several pathogenic fungi, including both human and plant pathogens (By similarity). The CFEM domain adopts a novel helical-basket fold that consists of six alpha-helices, and is uniquely stabilized by four disulfide bonds formed by its 8 signature cysteines (By similarity).</text>
</comment>
<comment type="similarity">
    <text evidence="6">Belongs to the RBT5 family.</text>
</comment>
<reference evidence="8" key="1">
    <citation type="journal article" date="2012" name="BMC Genomics">
        <title>Sequencing the genome of Marssonina brunnea reveals fungus-poplar co-evolution.</title>
        <authorList>
            <person name="Zhu S."/>
            <person name="Cao Y.-Z."/>
            <person name="Jiang C."/>
            <person name="Tan B.-Y."/>
            <person name="Wang Z."/>
            <person name="Feng S."/>
            <person name="Zhang L."/>
            <person name="Su X.-H."/>
            <person name="Brejova B."/>
            <person name="Vinar T."/>
            <person name="Xu M."/>
            <person name="Wang M.-X."/>
            <person name="Zhang S.-G."/>
            <person name="Huang M.-R."/>
            <person name="Wu R."/>
            <person name="Zhou Y."/>
        </authorList>
    </citation>
    <scope>NUCLEOTIDE SEQUENCE [LARGE SCALE GENOMIC DNA]</scope>
    <source>
        <strain evidence="8">MB_m1</strain>
    </source>
</reference>
<reference evidence="6" key="2">
    <citation type="journal article" date="2022" name="Front. Cell. Infect. Microbiol.">
        <title>Systematic identification and functional characterization of the CFEM proteins in poplar fungus Marssonina brunnea.</title>
        <authorList>
            <person name="Qian Y."/>
            <person name="Zheng X."/>
            <person name="Wang X."/>
            <person name="Yang J."/>
            <person name="Zheng X."/>
            <person name="Zeng Q."/>
            <person name="Li J."/>
            <person name="Zhuge Q."/>
            <person name="Xiong Q."/>
        </authorList>
    </citation>
    <scope>FUNCTION</scope>
    <scope>SUBCELLULAR LOCATION</scope>
    <scope>INDUCTION</scope>
    <source>
        <strain evidence="5">J4</strain>
    </source>
</reference>